<evidence type="ECO:0000255" key="1">
    <source>
        <dbReference type="HAMAP-Rule" id="MF_00004"/>
    </source>
</evidence>
<reference key="1">
    <citation type="journal article" date="2007" name="Photosyn. Res.">
        <title>Complete nucleotide sequence of the freshwater unicellular cyanobacterium Synechococcus elongatus PCC 6301 chromosome: gene content and organization.</title>
        <authorList>
            <person name="Sugita C."/>
            <person name="Ogata K."/>
            <person name="Shikata M."/>
            <person name="Jikuya H."/>
            <person name="Takano J."/>
            <person name="Furumichi M."/>
            <person name="Kanehisa M."/>
            <person name="Omata T."/>
            <person name="Sugiura M."/>
            <person name="Sugita M."/>
        </authorList>
    </citation>
    <scope>NUCLEOTIDE SEQUENCE [LARGE SCALE GENOMIC DNA]</scope>
    <source>
        <strain>ATCC 27144 / PCC 6301 / SAUG 1402/1</strain>
    </source>
</reference>
<comment type="function">
    <text evidence="1">Catalyzes a salvage reaction resulting in the formation of AMP, that is energically less costly than de novo synthesis.</text>
</comment>
<comment type="catalytic activity">
    <reaction evidence="1">
        <text>AMP + diphosphate = 5-phospho-alpha-D-ribose 1-diphosphate + adenine</text>
        <dbReference type="Rhea" id="RHEA:16609"/>
        <dbReference type="ChEBI" id="CHEBI:16708"/>
        <dbReference type="ChEBI" id="CHEBI:33019"/>
        <dbReference type="ChEBI" id="CHEBI:58017"/>
        <dbReference type="ChEBI" id="CHEBI:456215"/>
        <dbReference type="EC" id="2.4.2.7"/>
    </reaction>
</comment>
<comment type="pathway">
    <text evidence="1">Purine metabolism; AMP biosynthesis via salvage pathway; AMP from adenine: step 1/1.</text>
</comment>
<comment type="subunit">
    <text evidence="1">Homodimer.</text>
</comment>
<comment type="subcellular location">
    <subcellularLocation>
        <location evidence="1">Cytoplasm</location>
    </subcellularLocation>
</comment>
<comment type="similarity">
    <text evidence="1">Belongs to the purine/pyrimidine phosphoribosyltransferase family.</text>
</comment>
<protein>
    <recommendedName>
        <fullName evidence="1">Adenine phosphoribosyltransferase</fullName>
        <shortName evidence="1">APRT</shortName>
        <ecNumber evidence="1">2.4.2.7</ecNumber>
    </recommendedName>
</protein>
<dbReference type="EC" id="2.4.2.7" evidence="1"/>
<dbReference type="EMBL" id="AP008231">
    <property type="protein sequence ID" value="BAD79840.1"/>
    <property type="molecule type" value="Genomic_DNA"/>
</dbReference>
<dbReference type="RefSeq" id="WP_011243960.1">
    <property type="nucleotide sequence ID" value="NC_006576.1"/>
</dbReference>
<dbReference type="SMR" id="Q5N1I0"/>
<dbReference type="KEGG" id="syc:syc1650_d"/>
<dbReference type="eggNOG" id="COG0503">
    <property type="taxonomic scope" value="Bacteria"/>
</dbReference>
<dbReference type="UniPathway" id="UPA00588">
    <property type="reaction ID" value="UER00646"/>
</dbReference>
<dbReference type="Proteomes" id="UP000001175">
    <property type="component" value="Chromosome"/>
</dbReference>
<dbReference type="GO" id="GO:0005737">
    <property type="term" value="C:cytoplasm"/>
    <property type="evidence" value="ECO:0007669"/>
    <property type="project" value="UniProtKB-SubCell"/>
</dbReference>
<dbReference type="GO" id="GO:0002055">
    <property type="term" value="F:adenine binding"/>
    <property type="evidence" value="ECO:0007669"/>
    <property type="project" value="TreeGrafter"/>
</dbReference>
<dbReference type="GO" id="GO:0003999">
    <property type="term" value="F:adenine phosphoribosyltransferase activity"/>
    <property type="evidence" value="ECO:0007669"/>
    <property type="project" value="UniProtKB-UniRule"/>
</dbReference>
<dbReference type="GO" id="GO:0016208">
    <property type="term" value="F:AMP binding"/>
    <property type="evidence" value="ECO:0007669"/>
    <property type="project" value="TreeGrafter"/>
</dbReference>
<dbReference type="GO" id="GO:0006168">
    <property type="term" value="P:adenine salvage"/>
    <property type="evidence" value="ECO:0007669"/>
    <property type="project" value="InterPro"/>
</dbReference>
<dbReference type="GO" id="GO:0044209">
    <property type="term" value="P:AMP salvage"/>
    <property type="evidence" value="ECO:0007669"/>
    <property type="project" value="UniProtKB-UniRule"/>
</dbReference>
<dbReference type="GO" id="GO:0006166">
    <property type="term" value="P:purine ribonucleoside salvage"/>
    <property type="evidence" value="ECO:0007669"/>
    <property type="project" value="UniProtKB-KW"/>
</dbReference>
<dbReference type="CDD" id="cd06223">
    <property type="entry name" value="PRTases_typeI"/>
    <property type="match status" value="1"/>
</dbReference>
<dbReference type="FunFam" id="3.40.50.2020:FF:000004">
    <property type="entry name" value="Adenine phosphoribosyltransferase"/>
    <property type="match status" value="1"/>
</dbReference>
<dbReference type="Gene3D" id="3.40.50.2020">
    <property type="match status" value="1"/>
</dbReference>
<dbReference type="HAMAP" id="MF_00004">
    <property type="entry name" value="Aden_phosphoribosyltr"/>
    <property type="match status" value="1"/>
</dbReference>
<dbReference type="InterPro" id="IPR005764">
    <property type="entry name" value="Ade_phspho_trans"/>
</dbReference>
<dbReference type="InterPro" id="IPR000836">
    <property type="entry name" value="PRibTrfase_dom"/>
</dbReference>
<dbReference type="InterPro" id="IPR029057">
    <property type="entry name" value="PRTase-like"/>
</dbReference>
<dbReference type="InterPro" id="IPR050054">
    <property type="entry name" value="UPRTase/APRTase"/>
</dbReference>
<dbReference type="NCBIfam" id="TIGR01090">
    <property type="entry name" value="apt"/>
    <property type="match status" value="1"/>
</dbReference>
<dbReference type="NCBIfam" id="NF002634">
    <property type="entry name" value="PRK02304.1-3"/>
    <property type="match status" value="1"/>
</dbReference>
<dbReference type="NCBIfam" id="NF002636">
    <property type="entry name" value="PRK02304.1-5"/>
    <property type="match status" value="1"/>
</dbReference>
<dbReference type="PANTHER" id="PTHR32315">
    <property type="entry name" value="ADENINE PHOSPHORIBOSYLTRANSFERASE"/>
    <property type="match status" value="1"/>
</dbReference>
<dbReference type="PANTHER" id="PTHR32315:SF3">
    <property type="entry name" value="ADENINE PHOSPHORIBOSYLTRANSFERASE"/>
    <property type="match status" value="1"/>
</dbReference>
<dbReference type="Pfam" id="PF00156">
    <property type="entry name" value="Pribosyltran"/>
    <property type="match status" value="1"/>
</dbReference>
<dbReference type="SUPFAM" id="SSF53271">
    <property type="entry name" value="PRTase-like"/>
    <property type="match status" value="1"/>
</dbReference>
<dbReference type="PROSITE" id="PS00103">
    <property type="entry name" value="PUR_PYR_PR_TRANSFER"/>
    <property type="match status" value="1"/>
</dbReference>
<gene>
    <name evidence="1" type="primary">apt</name>
    <name type="ordered locus">syc1650_d</name>
</gene>
<proteinExistence type="inferred from homology"/>
<organism>
    <name type="scientific">Synechococcus sp. (strain ATCC 27144 / PCC 6301 / SAUG 1402/1)</name>
    <name type="common">Anacystis nidulans</name>
    <dbReference type="NCBI Taxonomy" id="269084"/>
    <lineage>
        <taxon>Bacteria</taxon>
        <taxon>Bacillati</taxon>
        <taxon>Cyanobacteriota</taxon>
        <taxon>Cyanophyceae</taxon>
        <taxon>Synechococcales</taxon>
        <taxon>Synechococcaceae</taxon>
        <taxon>Synechococcus</taxon>
    </lineage>
</organism>
<feature type="chain" id="PRO_0000149475" description="Adenine phosphoribosyltransferase">
    <location>
        <begin position="1"/>
        <end position="171"/>
    </location>
</feature>
<accession>Q5N1I0</accession>
<name>APT_SYNP6</name>
<keyword id="KW-0963">Cytoplasm</keyword>
<keyword id="KW-0328">Glycosyltransferase</keyword>
<keyword id="KW-0660">Purine salvage</keyword>
<keyword id="KW-0808">Transferase</keyword>
<sequence length="171" mass="18707">MDLKTLIREIPDFPKPGILFRDYTTVLKDPQGWRYSIDRLTELIKPLEPTAIVGIESRGFILGAPLAYQLGLGFVPVRKPGKLPADTHSVEYELEYGSDRLEIHQDALAPGDRVVVVDDLIATGGTASATATLIDRCSATLAGFAFVIELEGLNGRDRLPEVPIISLVSYD</sequence>